<proteinExistence type="inferred from homology"/>
<evidence type="ECO:0000255" key="1">
    <source>
        <dbReference type="HAMAP-Rule" id="MF_01321"/>
    </source>
</evidence>
<reference key="1">
    <citation type="journal article" date="2006" name="Genes Genet. Syst.">
        <title>Complete nucleotide sequence of the cotton (Gossypium barbadense L.) chloroplast genome with a comparative analysis of sequences among 9 dicot plants.</title>
        <authorList>
            <person name="Ibrahim R.I.H."/>
            <person name="Azuma J."/>
            <person name="Sakamoto M."/>
        </authorList>
    </citation>
    <scope>NUCLEOTIDE SEQUENCE [LARGE SCALE GENOMIC DNA]</scope>
</reference>
<keyword id="KW-0150">Chloroplast</keyword>
<keyword id="KW-0240">DNA-directed RNA polymerase</keyword>
<keyword id="KW-0548">Nucleotidyltransferase</keyword>
<keyword id="KW-0934">Plastid</keyword>
<keyword id="KW-0804">Transcription</keyword>
<keyword id="KW-0808">Transferase</keyword>
<feature type="chain" id="PRO_0000276588" description="DNA-directed RNA polymerase subunit beta">
    <location>
        <begin position="1"/>
        <end position="1070"/>
    </location>
</feature>
<gene>
    <name evidence="1" type="primary">rpoB</name>
</gene>
<accession>A0ZZ27</accession>
<comment type="function">
    <text evidence="1">DNA-dependent RNA polymerase catalyzes the transcription of DNA into RNA using the four ribonucleoside triphosphates as substrates.</text>
</comment>
<comment type="catalytic activity">
    <reaction evidence="1">
        <text>RNA(n) + a ribonucleoside 5'-triphosphate = RNA(n+1) + diphosphate</text>
        <dbReference type="Rhea" id="RHEA:21248"/>
        <dbReference type="Rhea" id="RHEA-COMP:14527"/>
        <dbReference type="Rhea" id="RHEA-COMP:17342"/>
        <dbReference type="ChEBI" id="CHEBI:33019"/>
        <dbReference type="ChEBI" id="CHEBI:61557"/>
        <dbReference type="ChEBI" id="CHEBI:140395"/>
        <dbReference type="EC" id="2.7.7.6"/>
    </reaction>
</comment>
<comment type="subunit">
    <text evidence="1">In plastids the minimal PEP RNA polymerase catalytic core is composed of four subunits: alpha, beta, beta', and beta''. When a (nuclear-encoded) sigma factor is associated with the core the holoenzyme is formed, which can initiate transcription.</text>
</comment>
<comment type="subcellular location">
    <subcellularLocation>
        <location>Plastid</location>
        <location>Chloroplast</location>
    </subcellularLocation>
</comment>
<comment type="similarity">
    <text evidence="1">Belongs to the RNA polymerase beta chain family.</text>
</comment>
<dbReference type="EC" id="2.7.7.6" evidence="1"/>
<dbReference type="EMBL" id="AP009123">
    <property type="protein sequence ID" value="BAF41239.1"/>
    <property type="molecule type" value="Genomic_DNA"/>
</dbReference>
<dbReference type="RefSeq" id="YP_913179.1">
    <property type="nucleotide sequence ID" value="NC_008641.1"/>
</dbReference>
<dbReference type="SMR" id="A0ZZ27"/>
<dbReference type="GeneID" id="4575245"/>
<dbReference type="GO" id="GO:0009507">
    <property type="term" value="C:chloroplast"/>
    <property type="evidence" value="ECO:0007669"/>
    <property type="project" value="UniProtKB-SubCell"/>
</dbReference>
<dbReference type="GO" id="GO:0000428">
    <property type="term" value="C:DNA-directed RNA polymerase complex"/>
    <property type="evidence" value="ECO:0007669"/>
    <property type="project" value="UniProtKB-KW"/>
</dbReference>
<dbReference type="GO" id="GO:0005739">
    <property type="term" value="C:mitochondrion"/>
    <property type="evidence" value="ECO:0007669"/>
    <property type="project" value="GOC"/>
</dbReference>
<dbReference type="GO" id="GO:0003677">
    <property type="term" value="F:DNA binding"/>
    <property type="evidence" value="ECO:0007669"/>
    <property type="project" value="UniProtKB-UniRule"/>
</dbReference>
<dbReference type="GO" id="GO:0003899">
    <property type="term" value="F:DNA-directed RNA polymerase activity"/>
    <property type="evidence" value="ECO:0007669"/>
    <property type="project" value="UniProtKB-UniRule"/>
</dbReference>
<dbReference type="GO" id="GO:0032549">
    <property type="term" value="F:ribonucleoside binding"/>
    <property type="evidence" value="ECO:0007669"/>
    <property type="project" value="InterPro"/>
</dbReference>
<dbReference type="GO" id="GO:0006351">
    <property type="term" value="P:DNA-templated transcription"/>
    <property type="evidence" value="ECO:0007669"/>
    <property type="project" value="UniProtKB-UniRule"/>
</dbReference>
<dbReference type="CDD" id="cd00653">
    <property type="entry name" value="RNA_pol_B_RPB2"/>
    <property type="match status" value="1"/>
</dbReference>
<dbReference type="FunFam" id="2.40.50.150:FF:000006">
    <property type="entry name" value="DNA-directed RNA polymerase subunit beta"/>
    <property type="match status" value="1"/>
</dbReference>
<dbReference type="FunFam" id="3.90.1110.10:FF:000009">
    <property type="entry name" value="DNA-directed RNA polymerase subunit beta"/>
    <property type="match status" value="1"/>
</dbReference>
<dbReference type="Gene3D" id="2.40.50.100">
    <property type="match status" value="1"/>
</dbReference>
<dbReference type="Gene3D" id="2.40.50.150">
    <property type="match status" value="1"/>
</dbReference>
<dbReference type="Gene3D" id="3.90.1100.10">
    <property type="match status" value="1"/>
</dbReference>
<dbReference type="Gene3D" id="2.30.150.10">
    <property type="entry name" value="DNA-directed RNA polymerase, beta subunit, external 1 domain"/>
    <property type="match status" value="1"/>
</dbReference>
<dbReference type="Gene3D" id="2.40.270.10">
    <property type="entry name" value="DNA-directed RNA polymerase, subunit 2, domain 6"/>
    <property type="match status" value="2"/>
</dbReference>
<dbReference type="Gene3D" id="3.90.1800.10">
    <property type="entry name" value="RNA polymerase alpha subunit dimerisation domain"/>
    <property type="match status" value="1"/>
</dbReference>
<dbReference type="Gene3D" id="3.90.1110.10">
    <property type="entry name" value="RNA polymerase Rpb2, domain 2"/>
    <property type="match status" value="1"/>
</dbReference>
<dbReference type="HAMAP" id="MF_01321">
    <property type="entry name" value="RNApol_bact_RpoB"/>
    <property type="match status" value="1"/>
</dbReference>
<dbReference type="InterPro" id="IPR042107">
    <property type="entry name" value="DNA-dir_RNA_pol_bsu_ext_1_sf"/>
</dbReference>
<dbReference type="InterPro" id="IPR015712">
    <property type="entry name" value="DNA-dir_RNA_pol_su2"/>
</dbReference>
<dbReference type="InterPro" id="IPR007120">
    <property type="entry name" value="DNA-dir_RNAP_su2_dom"/>
</dbReference>
<dbReference type="InterPro" id="IPR037033">
    <property type="entry name" value="DNA-dir_RNAP_su2_hyb_sf"/>
</dbReference>
<dbReference type="InterPro" id="IPR010243">
    <property type="entry name" value="RNA_pol_bsu_bac"/>
</dbReference>
<dbReference type="InterPro" id="IPR007121">
    <property type="entry name" value="RNA_pol_bsu_CS"/>
</dbReference>
<dbReference type="InterPro" id="IPR007642">
    <property type="entry name" value="RNA_pol_Rpb2_2"/>
</dbReference>
<dbReference type="InterPro" id="IPR037034">
    <property type="entry name" value="RNA_pol_Rpb2_2_sf"/>
</dbReference>
<dbReference type="InterPro" id="IPR007645">
    <property type="entry name" value="RNA_pol_Rpb2_3"/>
</dbReference>
<dbReference type="InterPro" id="IPR007641">
    <property type="entry name" value="RNA_pol_Rpb2_7"/>
</dbReference>
<dbReference type="InterPro" id="IPR014724">
    <property type="entry name" value="RNA_pol_RPB2_OB-fold"/>
</dbReference>
<dbReference type="NCBIfam" id="NF001616">
    <property type="entry name" value="PRK00405.1"/>
    <property type="match status" value="1"/>
</dbReference>
<dbReference type="PANTHER" id="PTHR20856">
    <property type="entry name" value="DNA-DIRECTED RNA POLYMERASE I SUBUNIT 2"/>
    <property type="match status" value="1"/>
</dbReference>
<dbReference type="Pfam" id="PF04561">
    <property type="entry name" value="RNA_pol_Rpb2_2"/>
    <property type="match status" value="1"/>
</dbReference>
<dbReference type="Pfam" id="PF04565">
    <property type="entry name" value="RNA_pol_Rpb2_3"/>
    <property type="match status" value="1"/>
</dbReference>
<dbReference type="Pfam" id="PF00562">
    <property type="entry name" value="RNA_pol_Rpb2_6"/>
    <property type="match status" value="1"/>
</dbReference>
<dbReference type="Pfam" id="PF04560">
    <property type="entry name" value="RNA_pol_Rpb2_7"/>
    <property type="match status" value="1"/>
</dbReference>
<dbReference type="SUPFAM" id="SSF64484">
    <property type="entry name" value="beta and beta-prime subunits of DNA dependent RNA-polymerase"/>
    <property type="match status" value="1"/>
</dbReference>
<dbReference type="PROSITE" id="PS01166">
    <property type="entry name" value="RNA_POL_BETA"/>
    <property type="match status" value="1"/>
</dbReference>
<geneLocation type="chloroplast"/>
<protein>
    <recommendedName>
        <fullName evidence="1">DNA-directed RNA polymerase subunit beta</fullName>
        <ecNumber evidence="1">2.7.7.6</ecNumber>
    </recommendedName>
    <alternativeName>
        <fullName evidence="1">PEP</fullName>
    </alternativeName>
    <alternativeName>
        <fullName evidence="1">Plastid-encoded RNA polymerase subunit beta</fullName>
        <shortName evidence="1">RNA polymerase subunit beta</shortName>
    </alternativeName>
</protein>
<organism>
    <name type="scientific">Gossypium barbadense</name>
    <name type="common">Sea Island cotton</name>
    <name type="synonym">Hibiscus barbadensis</name>
    <dbReference type="NCBI Taxonomy" id="3634"/>
    <lineage>
        <taxon>Eukaryota</taxon>
        <taxon>Viridiplantae</taxon>
        <taxon>Streptophyta</taxon>
        <taxon>Embryophyta</taxon>
        <taxon>Tracheophyta</taxon>
        <taxon>Spermatophyta</taxon>
        <taxon>Magnoliopsida</taxon>
        <taxon>eudicotyledons</taxon>
        <taxon>Gunneridae</taxon>
        <taxon>Pentapetalae</taxon>
        <taxon>rosids</taxon>
        <taxon>malvids</taxon>
        <taxon>Malvales</taxon>
        <taxon>Malvaceae</taxon>
        <taxon>Malvoideae</taxon>
        <taxon>Gossypium</taxon>
    </lineage>
</organism>
<name>RPOB_GOSBA</name>
<sequence>MLGDENGEMSTIPGLNQIQFEGFCGFMDRGLTEELYKFPKIEDTEQEIEFQLFVETYQLVEPLIKERDAVYESLTYSSELYVSAGLIWKTSKDMQEQTIFIGNIPLMNSLGTSIVNGIYRIVINQILQSPGIYYRSELDHNGISVYTGTIISDWGGRLELEIDRKARIWARVSRKQKISILVLSSAMGSNLREILENVCYPEIFLSFLTDKEKKKIGSKENAILEFYQQFSCVGGDPVFSESLCKELQKKFFQQRCELGRIGRRNMNQRLNLNIPQNNTFLLPRDILAAADRLIGMKFGMGPLDDMNHLKNKRIRSVADLLQDQFGLALVRLENVVRGTICGAIRHKLIPTPQNLVTSTPLTTTYESFFGLHPLSQVLDRTNPLTQIVHGRKLSYLGPGGLTGRTANFRIRDIHPSHYGRICPIDTSEGINVGLIGSLAIHARIGHWGSLESPFYKIFERSKKAQMLYLSPSRDEYYMVAAGNSLALNQGIQEEQVVPARYRQEFLTIAWEQVHLRSIFPFQYFSIGASLIPFIEHNDANRALMSSNMQRQAVPLSRSEKCIVGTGLERQVALDSGVPAIADHEGKIISTDTDKIILSGNGDALGIPLVMYQRSNKNTCMHQTARVRRGKCIKKGQILADGAATVGGELALGKNVLVAYMPWEGYNFEDAVLISERLVYEDIYTSFHIRKYEIQTHVTSQGPERITNEIPHLEAHLLRNLDKNGIVMLGSWVETGDILVGKLTPQVAKESSYAPEDRLLRAILGIQVSTSKETCLKLPIGGRGRVIDVRWVQKKGGSSYNPETIRVYISQKREIKVGDKVAGRHGNKGIISKILPRQDMPYLQDGRPVDMVFNPLGVPSRMNVGQLFECSLGLAGSLLDRHHRIAPFDERYEQEASRKLVFSELYQASKQTANPWVFEPEYPGKSRIFDGRTGGPFEQPVIIGKPYILKLIHQVDDKIHGRSSGYYALVTQQPLRGRSKQGGQRVGEMEVWALEGFGVAHILQEMLTYKSDHIRARQEVLGTTIIGGTIPKPEDAPESFRLLVRELRSLALELNHFLVSEKNFQINRKEA</sequence>